<evidence type="ECO:0000255" key="1"/>
<evidence type="ECO:0000305" key="2"/>
<accession>Q8GYW9</accession>
<accession>C0Z2E2</accession>
<accession>Q3EDD1</accession>
<accession>Q9LMH1</accession>
<proteinExistence type="evidence at transcript level"/>
<reference key="1">
    <citation type="journal article" date="2000" name="Nature">
        <title>Sequence and analysis of chromosome 1 of the plant Arabidopsis thaliana.</title>
        <authorList>
            <person name="Theologis A."/>
            <person name="Ecker J.R."/>
            <person name="Palm C.J."/>
            <person name="Federspiel N.A."/>
            <person name="Kaul S."/>
            <person name="White O."/>
            <person name="Alonso J."/>
            <person name="Altafi H."/>
            <person name="Araujo R."/>
            <person name="Bowman C.L."/>
            <person name="Brooks S.Y."/>
            <person name="Buehler E."/>
            <person name="Chan A."/>
            <person name="Chao Q."/>
            <person name="Chen H."/>
            <person name="Cheuk R.F."/>
            <person name="Chin C.W."/>
            <person name="Chung M.K."/>
            <person name="Conn L."/>
            <person name="Conway A.B."/>
            <person name="Conway A.R."/>
            <person name="Creasy T.H."/>
            <person name="Dewar K."/>
            <person name="Dunn P."/>
            <person name="Etgu P."/>
            <person name="Feldblyum T.V."/>
            <person name="Feng J.-D."/>
            <person name="Fong B."/>
            <person name="Fujii C.Y."/>
            <person name="Gill J.E."/>
            <person name="Goldsmith A.D."/>
            <person name="Haas B."/>
            <person name="Hansen N.F."/>
            <person name="Hughes B."/>
            <person name="Huizar L."/>
            <person name="Hunter J.L."/>
            <person name="Jenkins J."/>
            <person name="Johnson-Hopson C."/>
            <person name="Khan S."/>
            <person name="Khaykin E."/>
            <person name="Kim C.J."/>
            <person name="Koo H.L."/>
            <person name="Kremenetskaia I."/>
            <person name="Kurtz D.B."/>
            <person name="Kwan A."/>
            <person name="Lam B."/>
            <person name="Langin-Hooper S."/>
            <person name="Lee A."/>
            <person name="Lee J.M."/>
            <person name="Lenz C.A."/>
            <person name="Li J.H."/>
            <person name="Li Y.-P."/>
            <person name="Lin X."/>
            <person name="Liu S.X."/>
            <person name="Liu Z.A."/>
            <person name="Luros J.S."/>
            <person name="Maiti R."/>
            <person name="Marziali A."/>
            <person name="Militscher J."/>
            <person name="Miranda M."/>
            <person name="Nguyen M."/>
            <person name="Nierman W.C."/>
            <person name="Osborne B.I."/>
            <person name="Pai G."/>
            <person name="Peterson J."/>
            <person name="Pham P.K."/>
            <person name="Rizzo M."/>
            <person name="Rooney T."/>
            <person name="Rowley D."/>
            <person name="Sakano H."/>
            <person name="Salzberg S.L."/>
            <person name="Schwartz J.R."/>
            <person name="Shinn P."/>
            <person name="Southwick A.M."/>
            <person name="Sun H."/>
            <person name="Tallon L.J."/>
            <person name="Tambunga G."/>
            <person name="Toriumi M.J."/>
            <person name="Town C.D."/>
            <person name="Utterback T."/>
            <person name="Van Aken S."/>
            <person name="Vaysberg M."/>
            <person name="Vysotskaia V.S."/>
            <person name="Walker M."/>
            <person name="Wu D."/>
            <person name="Yu G."/>
            <person name="Fraser C.M."/>
            <person name="Venter J.C."/>
            <person name="Davis R.W."/>
        </authorList>
    </citation>
    <scope>NUCLEOTIDE SEQUENCE [LARGE SCALE GENOMIC DNA]</scope>
    <source>
        <strain>cv. Columbia</strain>
    </source>
</reference>
<reference key="2">
    <citation type="journal article" date="2017" name="Plant J.">
        <title>Araport11: a complete reannotation of the Arabidopsis thaliana reference genome.</title>
        <authorList>
            <person name="Cheng C.Y."/>
            <person name="Krishnakumar V."/>
            <person name="Chan A.P."/>
            <person name="Thibaud-Nissen F."/>
            <person name="Schobel S."/>
            <person name="Town C.D."/>
        </authorList>
    </citation>
    <scope>GENOME REANNOTATION</scope>
    <source>
        <strain>cv. Columbia</strain>
    </source>
</reference>
<reference key="3">
    <citation type="journal article" date="2002" name="Science">
        <title>Functional annotation of a full-length Arabidopsis cDNA collection.</title>
        <authorList>
            <person name="Seki M."/>
            <person name="Narusaka M."/>
            <person name="Kamiya A."/>
            <person name="Ishida J."/>
            <person name="Satou M."/>
            <person name="Sakurai T."/>
            <person name="Nakajima M."/>
            <person name="Enju A."/>
            <person name="Akiyama K."/>
            <person name="Oono Y."/>
            <person name="Muramatsu M."/>
            <person name="Hayashizaki Y."/>
            <person name="Kawai J."/>
            <person name="Carninci P."/>
            <person name="Itoh M."/>
            <person name="Ishii Y."/>
            <person name="Arakawa T."/>
            <person name="Shibata K."/>
            <person name="Shinagawa A."/>
            <person name="Shinozaki K."/>
        </authorList>
    </citation>
    <scope>NUCLEOTIDE SEQUENCE [LARGE SCALE MRNA] (ISOFORM 1)</scope>
    <source>
        <strain>cv. Columbia</strain>
    </source>
</reference>
<reference key="4">
    <citation type="journal article" date="2009" name="DNA Res.">
        <title>Analysis of multiple occurrences of alternative splicing events in Arabidopsis thaliana using novel sequenced full-length cDNAs.</title>
        <authorList>
            <person name="Iida K."/>
            <person name="Fukami-Kobayashi K."/>
            <person name="Toyoda A."/>
            <person name="Sakaki Y."/>
            <person name="Kobayashi M."/>
            <person name="Seki M."/>
            <person name="Shinozaki K."/>
        </authorList>
    </citation>
    <scope>NUCLEOTIDE SEQUENCE [LARGE SCALE MRNA] (ISOFORM 1)</scope>
    <source>
        <strain>cv. Columbia</strain>
    </source>
</reference>
<reference key="5">
    <citation type="journal article" date="2007" name="Plant J.">
        <title>The TUMOROUS SHOOT DEVELOPMENT2 gene of Arabidopsis encoding a putative methyltransferase is required for cell adhesion and co-ordinated plant development.</title>
        <authorList>
            <person name="Krupkova E."/>
            <person name="Immerzeel P."/>
            <person name="Pauly M."/>
            <person name="Schmulling T."/>
        </authorList>
    </citation>
    <scope>GENE FAMILY</scope>
</reference>
<organism>
    <name type="scientific">Arabidopsis thaliana</name>
    <name type="common">Mouse-ear cress</name>
    <dbReference type="NCBI Taxonomy" id="3702"/>
    <lineage>
        <taxon>Eukaryota</taxon>
        <taxon>Viridiplantae</taxon>
        <taxon>Streptophyta</taxon>
        <taxon>Embryophyta</taxon>
        <taxon>Tracheophyta</taxon>
        <taxon>Spermatophyta</taxon>
        <taxon>Magnoliopsida</taxon>
        <taxon>eudicotyledons</taxon>
        <taxon>Gunneridae</taxon>
        <taxon>Pentapetalae</taxon>
        <taxon>rosids</taxon>
        <taxon>malvids</taxon>
        <taxon>Brassicales</taxon>
        <taxon>Brassicaceae</taxon>
        <taxon>Camelineae</taxon>
        <taxon>Arabidopsis</taxon>
    </lineage>
</organism>
<protein>
    <recommendedName>
        <fullName>Probable methyltransferase PMT4</fullName>
        <ecNumber>2.1.1.-</ecNumber>
    </recommendedName>
</protein>
<dbReference type="EC" id="2.1.1.-"/>
<dbReference type="EMBL" id="AC068197">
    <property type="protein sequence ID" value="AAF79416.1"/>
    <property type="status" value="ALT_SEQ"/>
    <property type="molecule type" value="Genomic_DNA"/>
</dbReference>
<dbReference type="EMBL" id="CP002684">
    <property type="protein sequence ID" value="AEE29074.1"/>
    <property type="molecule type" value="Genomic_DNA"/>
</dbReference>
<dbReference type="EMBL" id="CP002684">
    <property type="protein sequence ID" value="AEE29075.1"/>
    <property type="molecule type" value="Genomic_DNA"/>
</dbReference>
<dbReference type="EMBL" id="CP002684">
    <property type="protein sequence ID" value="AEE29076.1"/>
    <property type="molecule type" value="Genomic_DNA"/>
</dbReference>
<dbReference type="EMBL" id="CP002684">
    <property type="protein sequence ID" value="AEE29077.1"/>
    <property type="molecule type" value="Genomic_DNA"/>
</dbReference>
<dbReference type="EMBL" id="CP002684">
    <property type="protein sequence ID" value="ANM59945.1"/>
    <property type="molecule type" value="Genomic_DNA"/>
</dbReference>
<dbReference type="EMBL" id="AK117344">
    <property type="protein sequence ID" value="BAC42014.1"/>
    <property type="molecule type" value="mRNA"/>
</dbReference>
<dbReference type="EMBL" id="AK318756">
    <property type="protein sequence ID" value="BAH56871.1"/>
    <property type="status" value="ALT_FRAME"/>
    <property type="molecule type" value="mRNA"/>
</dbReference>
<dbReference type="PIR" id="G86271">
    <property type="entry name" value="G86271"/>
</dbReference>
<dbReference type="RefSeq" id="NP_001322262.1">
    <molecule id="Q8GYW9-1"/>
    <property type="nucleotide sequence ID" value="NM_001332093.1"/>
</dbReference>
<dbReference type="RefSeq" id="NP_172839.1">
    <molecule id="Q8GYW9-1"/>
    <property type="nucleotide sequence ID" value="NM_101252.3"/>
</dbReference>
<dbReference type="RefSeq" id="NP_849656.2">
    <molecule id="Q8GYW9-2"/>
    <property type="nucleotide sequence ID" value="NM_179325.2"/>
</dbReference>
<dbReference type="RefSeq" id="NP_849657.1">
    <molecule id="Q8GYW9-1"/>
    <property type="nucleotide sequence ID" value="NM_179326.3"/>
</dbReference>
<dbReference type="RefSeq" id="NP_973819.1">
    <molecule id="Q8GYW9-1"/>
    <property type="nucleotide sequence ID" value="NM_202090.1"/>
</dbReference>
<dbReference type="FunCoup" id="Q8GYW9">
    <property type="interactions" value="452"/>
</dbReference>
<dbReference type="STRING" id="3702.Q8GYW9"/>
<dbReference type="GlyGen" id="Q8GYW9">
    <property type="glycosylation" value="2 sites"/>
</dbReference>
<dbReference type="PaxDb" id="3702-AT1G13860.1"/>
<dbReference type="ProteomicsDB" id="234684">
    <molecule id="Q8GYW9-1"/>
</dbReference>
<dbReference type="EnsemblPlants" id="AT1G13860.1">
    <molecule id="Q8GYW9-1"/>
    <property type="protein sequence ID" value="AT1G13860.1"/>
    <property type="gene ID" value="AT1G13860"/>
</dbReference>
<dbReference type="EnsemblPlants" id="AT1G13860.2">
    <molecule id="Q8GYW9-2"/>
    <property type="protein sequence ID" value="AT1G13860.2"/>
    <property type="gene ID" value="AT1G13860"/>
</dbReference>
<dbReference type="EnsemblPlants" id="AT1G13860.3">
    <molecule id="Q8GYW9-1"/>
    <property type="protein sequence ID" value="AT1G13860.3"/>
    <property type="gene ID" value="AT1G13860"/>
</dbReference>
<dbReference type="EnsemblPlants" id="AT1G13860.4">
    <molecule id="Q8GYW9-1"/>
    <property type="protein sequence ID" value="AT1G13860.4"/>
    <property type="gene ID" value="AT1G13860"/>
</dbReference>
<dbReference type="EnsemblPlants" id="AT1G13860.5">
    <molecule id="Q8GYW9-1"/>
    <property type="protein sequence ID" value="AT1G13860.5"/>
    <property type="gene ID" value="AT1G13860"/>
</dbReference>
<dbReference type="GeneID" id="837945"/>
<dbReference type="Gramene" id="AT1G13860.1">
    <molecule id="Q8GYW9-1"/>
    <property type="protein sequence ID" value="AT1G13860.1"/>
    <property type="gene ID" value="AT1G13860"/>
</dbReference>
<dbReference type="Gramene" id="AT1G13860.2">
    <molecule id="Q8GYW9-2"/>
    <property type="protein sequence ID" value="AT1G13860.2"/>
    <property type="gene ID" value="AT1G13860"/>
</dbReference>
<dbReference type="Gramene" id="AT1G13860.3">
    <molecule id="Q8GYW9-1"/>
    <property type="protein sequence ID" value="AT1G13860.3"/>
    <property type="gene ID" value="AT1G13860"/>
</dbReference>
<dbReference type="Gramene" id="AT1G13860.4">
    <molecule id="Q8GYW9-1"/>
    <property type="protein sequence ID" value="AT1G13860.4"/>
    <property type="gene ID" value="AT1G13860"/>
</dbReference>
<dbReference type="Gramene" id="AT1G13860.5">
    <molecule id="Q8GYW9-1"/>
    <property type="protein sequence ID" value="AT1G13860.5"/>
    <property type="gene ID" value="AT1G13860"/>
</dbReference>
<dbReference type="KEGG" id="ath:AT1G13860"/>
<dbReference type="Araport" id="AT1G13860"/>
<dbReference type="TAIR" id="AT1G13860">
    <property type="gene designation" value="QUL1"/>
</dbReference>
<dbReference type="eggNOG" id="ENOG502QT31">
    <property type="taxonomic scope" value="Eukaryota"/>
</dbReference>
<dbReference type="HOGENOM" id="CLU_010485_2_3_1"/>
<dbReference type="InParanoid" id="Q8GYW9"/>
<dbReference type="OMA" id="GRDIIWT"/>
<dbReference type="PhylomeDB" id="Q8GYW9"/>
<dbReference type="PRO" id="PR:Q8GYW9"/>
<dbReference type="Proteomes" id="UP000006548">
    <property type="component" value="Chromosome 1"/>
</dbReference>
<dbReference type="ExpressionAtlas" id="Q8GYW9">
    <property type="expression patterns" value="baseline and differential"/>
</dbReference>
<dbReference type="GO" id="GO:0005789">
    <property type="term" value="C:endoplasmic reticulum membrane"/>
    <property type="evidence" value="ECO:0007669"/>
    <property type="project" value="UniProtKB-SubCell"/>
</dbReference>
<dbReference type="GO" id="GO:0000325">
    <property type="term" value="C:plant-type vacuole"/>
    <property type="evidence" value="ECO:0007005"/>
    <property type="project" value="TAIR"/>
</dbReference>
<dbReference type="GO" id="GO:0008168">
    <property type="term" value="F:methyltransferase activity"/>
    <property type="evidence" value="ECO:0007669"/>
    <property type="project" value="UniProtKB-KW"/>
</dbReference>
<dbReference type="GO" id="GO:0032259">
    <property type="term" value="P:methylation"/>
    <property type="evidence" value="ECO:0007669"/>
    <property type="project" value="UniProtKB-KW"/>
</dbReference>
<dbReference type="CDD" id="cd02440">
    <property type="entry name" value="AdoMet_MTases"/>
    <property type="match status" value="1"/>
</dbReference>
<dbReference type="FunFam" id="3.40.50.150:FF:000119">
    <property type="entry name" value="probable pectin methyltransferase QUA2"/>
    <property type="match status" value="1"/>
</dbReference>
<dbReference type="Gene3D" id="3.40.50.150">
    <property type="entry name" value="Vaccinia Virus protein VP39"/>
    <property type="match status" value="1"/>
</dbReference>
<dbReference type="InterPro" id="IPR004159">
    <property type="entry name" value="Put_SAM_MeTrfase"/>
</dbReference>
<dbReference type="InterPro" id="IPR029063">
    <property type="entry name" value="SAM-dependent_MTases_sf"/>
</dbReference>
<dbReference type="PANTHER" id="PTHR10108:SF1083">
    <property type="entry name" value="METHYLTRANSFERASE PMT4-RELATED"/>
    <property type="match status" value="1"/>
</dbReference>
<dbReference type="PANTHER" id="PTHR10108">
    <property type="entry name" value="SAM-DEPENDENT METHYLTRANSFERASE"/>
    <property type="match status" value="1"/>
</dbReference>
<dbReference type="Pfam" id="PF03141">
    <property type="entry name" value="Methyltransf_29"/>
    <property type="match status" value="1"/>
</dbReference>
<dbReference type="SUPFAM" id="SSF53335">
    <property type="entry name" value="S-adenosyl-L-methionine-dependent methyltransferases"/>
    <property type="match status" value="2"/>
</dbReference>
<feature type="chain" id="PRO_0000393244" description="Probable methyltransferase PMT4">
    <location>
        <begin position="1"/>
        <end position="603"/>
    </location>
</feature>
<feature type="topological domain" description="Cytoplasmic" evidence="1">
    <location>
        <begin position="1"/>
        <end position="12"/>
    </location>
</feature>
<feature type="transmembrane region" description="Helical; Signal-anchor for type II membrane protein" evidence="1">
    <location>
        <begin position="13"/>
        <end position="33"/>
    </location>
</feature>
<feature type="topological domain" description="Lumenal" evidence="1">
    <location>
        <begin position="34"/>
        <end position="603"/>
    </location>
</feature>
<feature type="glycosylation site" description="N-linked (GlcNAc...) asparagine" evidence="1">
    <location>
        <position position="96"/>
    </location>
</feature>
<feature type="glycosylation site" description="N-linked (GlcNAc...) asparagine" evidence="1">
    <location>
        <position position="393"/>
    </location>
</feature>
<feature type="splice variant" id="VSP_038901" description="In isoform 2." evidence="2">
    <location>
        <begin position="1"/>
        <end position="156"/>
    </location>
</feature>
<feature type="sequence conflict" description="In Ref. 3; BAC42014." evidence="2" ref="3">
    <original>D</original>
    <variation>G</variation>
    <location>
        <position position="101"/>
    </location>
</feature>
<feature type="sequence conflict" description="In Ref. 3; BAC42014." evidence="2" ref="3">
    <original>I</original>
    <variation>T</variation>
    <location>
        <position position="419"/>
    </location>
</feature>
<comment type="subcellular location">
    <subcellularLocation>
        <location evidence="2">Endoplasmic reticulum membrane</location>
        <topology evidence="2">Single-pass type II membrane protein</topology>
    </subcellularLocation>
</comment>
<comment type="alternative products">
    <event type="alternative splicing"/>
    <isoform>
        <id>Q8GYW9-1</id>
        <name>1</name>
        <sequence type="displayed"/>
    </isoform>
    <isoform>
        <id>Q8GYW9-2</id>
        <name>2</name>
        <sequence type="described" ref="VSP_038901"/>
    </isoform>
</comment>
<comment type="similarity">
    <text evidence="2">Belongs to the methyltransferase superfamily.</text>
</comment>
<comment type="sequence caution" evidence="2">
    <conflict type="erroneous gene model prediction">
        <sequence resource="EMBL-CDS" id="AAF79416"/>
    </conflict>
</comment>
<comment type="sequence caution" evidence="2">
    <conflict type="frameshift">
        <sequence resource="EMBL-CDS" id="BAH56871"/>
    </conflict>
</comment>
<keyword id="KW-0025">Alternative splicing</keyword>
<keyword id="KW-0256">Endoplasmic reticulum</keyword>
<keyword id="KW-0325">Glycoprotein</keyword>
<keyword id="KW-0472">Membrane</keyword>
<keyword id="KW-0489">Methyltransferase</keyword>
<keyword id="KW-1185">Reference proteome</keyword>
<keyword id="KW-0735">Signal-anchor</keyword>
<keyword id="KW-0808">Transferase</keyword>
<keyword id="KW-0812">Transmembrane</keyword>
<keyword id="KW-1133">Transmembrane helix</keyword>
<gene>
    <name type="ordered locus">At1g13860</name>
    <name type="ORF">F16A14.2</name>
    <name type="ORF">F16A14.7</name>
</gene>
<name>PMT4_ARATH</name>
<sequence>MKVASVIGLRPRISGLLFLTLGVIALITILVPNSDSSSTTSTTRVPPSNIYSNYGRVKEQAAVDYLDLRFFSLGVNRLKEFPLCGKERDNYVPCYNVTESDRNCEFAREEERCLVRPPRDYKIPLRWPVGRDIIWTGNVKITKDQFLSSGTMTKRLMLLEENQITFHSDDGLIFDGVKDYAFQIAEMIGLGSDTEFPQAGIRTVLDIGCGFGSFGAHLVSLNVMPICIAEYETSGSQVQLALERGLPAMIGNFFSKQLPYPALSFDMVHCAQCGITWDIKDAMLLLEVDRVLKPGGYFVLTSPTSKAQGNSPDTKKTSISTRVDELSKKICWSLSGQQDETFLWQKTADPNCYSSRSQASIPVCKDDDSVPYYHPLVPCISGTKSKRWIPIQNRSRASGTSLSELEIHGIKPEEFDEDIQVWRSALKNYWSLLTPLIFSDHPKRPGDEDPVPPFYMIRNAMDMNARYGNLNQALLNQGKSVWVMNVVPVKARNTLPIILDRGFTGALHDWCEPFPTYPRTYDMLHANELLTHLSSERCSLMDLFLEMDRILRPEGWVVLSDKLGVIEMARTLAARVRWEARVIDIQDGSDQRLLVCQKPLLKK</sequence>